<evidence type="ECO:0000255" key="1">
    <source>
        <dbReference type="HAMAP-Rule" id="MF_00365"/>
    </source>
</evidence>
<feature type="chain" id="PRO_1000121092" description="DNA replication and repair protein RecF">
    <location>
        <begin position="1"/>
        <end position="365"/>
    </location>
</feature>
<feature type="binding site" evidence="1">
    <location>
        <begin position="30"/>
        <end position="37"/>
    </location>
    <ligand>
        <name>ATP</name>
        <dbReference type="ChEBI" id="CHEBI:30616"/>
    </ligand>
</feature>
<dbReference type="EMBL" id="CP000934">
    <property type="protein sequence ID" value="ACE84963.1"/>
    <property type="molecule type" value="Genomic_DNA"/>
</dbReference>
<dbReference type="RefSeq" id="WP_012485687.1">
    <property type="nucleotide sequence ID" value="NC_010995.1"/>
</dbReference>
<dbReference type="SMR" id="B3PEM4"/>
<dbReference type="STRING" id="498211.CJA_0003"/>
<dbReference type="KEGG" id="cja:CJA_0003"/>
<dbReference type="eggNOG" id="COG1195">
    <property type="taxonomic scope" value="Bacteria"/>
</dbReference>
<dbReference type="HOGENOM" id="CLU_040267_0_0_6"/>
<dbReference type="OrthoDB" id="9803889at2"/>
<dbReference type="Proteomes" id="UP000001036">
    <property type="component" value="Chromosome"/>
</dbReference>
<dbReference type="GO" id="GO:0005737">
    <property type="term" value="C:cytoplasm"/>
    <property type="evidence" value="ECO:0007669"/>
    <property type="project" value="UniProtKB-SubCell"/>
</dbReference>
<dbReference type="GO" id="GO:0005524">
    <property type="term" value="F:ATP binding"/>
    <property type="evidence" value="ECO:0007669"/>
    <property type="project" value="UniProtKB-UniRule"/>
</dbReference>
<dbReference type="GO" id="GO:0003697">
    <property type="term" value="F:single-stranded DNA binding"/>
    <property type="evidence" value="ECO:0007669"/>
    <property type="project" value="UniProtKB-UniRule"/>
</dbReference>
<dbReference type="GO" id="GO:0006260">
    <property type="term" value="P:DNA replication"/>
    <property type="evidence" value="ECO:0007669"/>
    <property type="project" value="UniProtKB-UniRule"/>
</dbReference>
<dbReference type="GO" id="GO:0000731">
    <property type="term" value="P:DNA synthesis involved in DNA repair"/>
    <property type="evidence" value="ECO:0007669"/>
    <property type="project" value="TreeGrafter"/>
</dbReference>
<dbReference type="GO" id="GO:0006302">
    <property type="term" value="P:double-strand break repair"/>
    <property type="evidence" value="ECO:0007669"/>
    <property type="project" value="TreeGrafter"/>
</dbReference>
<dbReference type="GO" id="GO:0009432">
    <property type="term" value="P:SOS response"/>
    <property type="evidence" value="ECO:0007669"/>
    <property type="project" value="UniProtKB-UniRule"/>
</dbReference>
<dbReference type="Gene3D" id="3.40.50.300">
    <property type="entry name" value="P-loop containing nucleotide triphosphate hydrolases"/>
    <property type="match status" value="1"/>
</dbReference>
<dbReference type="Gene3D" id="1.20.1050.90">
    <property type="entry name" value="RecF/RecN/SMC, N-terminal domain"/>
    <property type="match status" value="1"/>
</dbReference>
<dbReference type="HAMAP" id="MF_00365">
    <property type="entry name" value="RecF"/>
    <property type="match status" value="1"/>
</dbReference>
<dbReference type="InterPro" id="IPR001238">
    <property type="entry name" value="DNA-binding_RecF"/>
</dbReference>
<dbReference type="InterPro" id="IPR018078">
    <property type="entry name" value="DNA-binding_RecF_CS"/>
</dbReference>
<dbReference type="InterPro" id="IPR027417">
    <property type="entry name" value="P-loop_NTPase"/>
</dbReference>
<dbReference type="InterPro" id="IPR003395">
    <property type="entry name" value="RecF/RecN/SMC_N"/>
</dbReference>
<dbReference type="InterPro" id="IPR042174">
    <property type="entry name" value="RecF_2"/>
</dbReference>
<dbReference type="NCBIfam" id="TIGR00611">
    <property type="entry name" value="recf"/>
    <property type="match status" value="1"/>
</dbReference>
<dbReference type="PANTHER" id="PTHR32182">
    <property type="entry name" value="DNA REPLICATION AND REPAIR PROTEIN RECF"/>
    <property type="match status" value="1"/>
</dbReference>
<dbReference type="PANTHER" id="PTHR32182:SF0">
    <property type="entry name" value="DNA REPLICATION AND REPAIR PROTEIN RECF"/>
    <property type="match status" value="1"/>
</dbReference>
<dbReference type="Pfam" id="PF02463">
    <property type="entry name" value="SMC_N"/>
    <property type="match status" value="1"/>
</dbReference>
<dbReference type="SUPFAM" id="SSF52540">
    <property type="entry name" value="P-loop containing nucleoside triphosphate hydrolases"/>
    <property type="match status" value="1"/>
</dbReference>
<dbReference type="PROSITE" id="PS00617">
    <property type="entry name" value="RECF_1"/>
    <property type="match status" value="1"/>
</dbReference>
<dbReference type="PROSITE" id="PS00618">
    <property type="entry name" value="RECF_2"/>
    <property type="match status" value="1"/>
</dbReference>
<name>RECF_CELJU</name>
<protein>
    <recommendedName>
        <fullName evidence="1">DNA replication and repair protein RecF</fullName>
    </recommendedName>
</protein>
<comment type="function">
    <text evidence="1">The RecF protein is involved in DNA metabolism; it is required for DNA replication and normal SOS inducibility. RecF binds preferentially to single-stranded, linear DNA. It also seems to bind ATP.</text>
</comment>
<comment type="subcellular location">
    <subcellularLocation>
        <location evidence="1">Cytoplasm</location>
    </subcellularLocation>
</comment>
<comment type="similarity">
    <text evidence="1">Belongs to the RecF family.</text>
</comment>
<sequence>MSLARLRVHHLRNLESVDIEPSSRVNLIYGLNGSGKTSLLEAINVLALGRSFRSHKHKPLISHQQLAFTIFGRVLADDAAEIPIGIQRNQQGEVMLKANGANVGSIADLAIFLPVQVINSDTFLLLEGSPKVRRQFMDWLVFHVEHQFYPQWKSLQRCLKHRNSLLRRDRIDPFELSTWDQELVQLTEQIHCFREQCMALFVPVFEQLLQEFVVLEGLELHYQRGWDKHKDYAQVLQDSFERDKRLGVTHAGSHRAELRITLNGQDAAEILSRGQQKLLVCALKIAQGLVFSQVTGRKCIYLVDDLPAELDEQHRQRLVDWLYRMDTQVFITGVERQALLAGWLDKPEITPKMFHVEHGRVSCPA</sequence>
<accession>B3PEM4</accession>
<proteinExistence type="inferred from homology"/>
<organism>
    <name type="scientific">Cellvibrio japonicus (strain Ueda107)</name>
    <name type="common">Pseudomonas fluorescens subsp. cellulosa</name>
    <dbReference type="NCBI Taxonomy" id="498211"/>
    <lineage>
        <taxon>Bacteria</taxon>
        <taxon>Pseudomonadati</taxon>
        <taxon>Pseudomonadota</taxon>
        <taxon>Gammaproteobacteria</taxon>
        <taxon>Cellvibrionales</taxon>
        <taxon>Cellvibrionaceae</taxon>
        <taxon>Cellvibrio</taxon>
    </lineage>
</organism>
<gene>
    <name evidence="1" type="primary">recF</name>
    <name type="ordered locus">CJA_0003</name>
</gene>
<reference key="1">
    <citation type="journal article" date="2008" name="J. Bacteriol.">
        <title>Insights into plant cell wall degradation from the genome sequence of the soil bacterium Cellvibrio japonicus.</title>
        <authorList>
            <person name="DeBoy R.T."/>
            <person name="Mongodin E.F."/>
            <person name="Fouts D.E."/>
            <person name="Tailford L.E."/>
            <person name="Khouri H."/>
            <person name="Emerson J.B."/>
            <person name="Mohamoud Y."/>
            <person name="Watkins K."/>
            <person name="Henrissat B."/>
            <person name="Gilbert H.J."/>
            <person name="Nelson K.E."/>
        </authorList>
    </citation>
    <scope>NUCLEOTIDE SEQUENCE [LARGE SCALE GENOMIC DNA]</scope>
    <source>
        <strain>Ueda107</strain>
    </source>
</reference>
<keyword id="KW-0067">ATP-binding</keyword>
<keyword id="KW-0963">Cytoplasm</keyword>
<keyword id="KW-0227">DNA damage</keyword>
<keyword id="KW-0234">DNA repair</keyword>
<keyword id="KW-0235">DNA replication</keyword>
<keyword id="KW-0238">DNA-binding</keyword>
<keyword id="KW-0547">Nucleotide-binding</keyword>
<keyword id="KW-1185">Reference proteome</keyword>
<keyword id="KW-0742">SOS response</keyword>